<proteinExistence type="inferred from homology"/>
<organism>
    <name type="scientific">Pediococcus pentosaceus (strain ATCC 25745 / CCUG 21536 / LMG 10740 / 183-1w)</name>
    <dbReference type="NCBI Taxonomy" id="278197"/>
    <lineage>
        <taxon>Bacteria</taxon>
        <taxon>Bacillati</taxon>
        <taxon>Bacillota</taxon>
        <taxon>Bacilli</taxon>
        <taxon>Lactobacillales</taxon>
        <taxon>Lactobacillaceae</taxon>
        <taxon>Pediococcus</taxon>
    </lineage>
</organism>
<reference key="1">
    <citation type="journal article" date="2006" name="Proc. Natl. Acad. Sci. U.S.A.">
        <title>Comparative genomics of the lactic acid bacteria.</title>
        <authorList>
            <person name="Makarova K.S."/>
            <person name="Slesarev A."/>
            <person name="Wolf Y.I."/>
            <person name="Sorokin A."/>
            <person name="Mirkin B."/>
            <person name="Koonin E.V."/>
            <person name="Pavlov A."/>
            <person name="Pavlova N."/>
            <person name="Karamychev V."/>
            <person name="Polouchine N."/>
            <person name="Shakhova V."/>
            <person name="Grigoriev I."/>
            <person name="Lou Y."/>
            <person name="Rohksar D."/>
            <person name="Lucas S."/>
            <person name="Huang K."/>
            <person name="Goodstein D.M."/>
            <person name="Hawkins T."/>
            <person name="Plengvidhya V."/>
            <person name="Welker D."/>
            <person name="Hughes J."/>
            <person name="Goh Y."/>
            <person name="Benson A."/>
            <person name="Baldwin K."/>
            <person name="Lee J.-H."/>
            <person name="Diaz-Muniz I."/>
            <person name="Dosti B."/>
            <person name="Smeianov V."/>
            <person name="Wechter W."/>
            <person name="Barabote R."/>
            <person name="Lorca G."/>
            <person name="Altermann E."/>
            <person name="Barrangou R."/>
            <person name="Ganesan B."/>
            <person name="Xie Y."/>
            <person name="Rawsthorne H."/>
            <person name="Tamir D."/>
            <person name="Parker C."/>
            <person name="Breidt F."/>
            <person name="Broadbent J.R."/>
            <person name="Hutkins R."/>
            <person name="O'Sullivan D."/>
            <person name="Steele J."/>
            <person name="Unlu G."/>
            <person name="Saier M.H. Jr."/>
            <person name="Klaenhammer T."/>
            <person name="Richardson P."/>
            <person name="Kozyavkin S."/>
            <person name="Weimer B.C."/>
            <person name="Mills D.A."/>
        </authorList>
    </citation>
    <scope>NUCLEOTIDE SEQUENCE [LARGE SCALE GENOMIC DNA]</scope>
    <source>
        <strain>ATCC 25745 / CCUG 21536 / LMG 10740 / 183-1w</strain>
    </source>
</reference>
<keyword id="KW-0227">DNA damage</keyword>
<keyword id="KW-0234">DNA repair</keyword>
<feature type="chain" id="PRO_1000010052" description="DNA mismatch repair protein MutL">
    <location>
        <begin position="1"/>
        <end position="645"/>
    </location>
</feature>
<comment type="function">
    <text evidence="1">This protein is involved in the repair of mismatches in DNA. It is required for dam-dependent methyl-directed DNA mismatch repair. May act as a 'molecular matchmaker', a protein that promotes the formation of a stable complex between two or more DNA-binding proteins in an ATP-dependent manner without itself being part of a final effector complex.</text>
</comment>
<comment type="similarity">
    <text evidence="1">Belongs to the DNA mismatch repair MutL/HexB family.</text>
</comment>
<protein>
    <recommendedName>
        <fullName evidence="1">DNA mismatch repair protein MutL</fullName>
    </recommendedName>
</protein>
<evidence type="ECO:0000255" key="1">
    <source>
        <dbReference type="HAMAP-Rule" id="MF_00149"/>
    </source>
</evidence>
<name>MUTL_PEDPA</name>
<gene>
    <name evidence="1" type="primary">mutL</name>
    <name type="ordered locus">PEPE_1273</name>
</gene>
<accession>Q03EQ8</accession>
<dbReference type="EMBL" id="CP000422">
    <property type="protein sequence ID" value="ABJ68314.1"/>
    <property type="molecule type" value="Genomic_DNA"/>
</dbReference>
<dbReference type="RefSeq" id="WP_011673583.1">
    <property type="nucleotide sequence ID" value="NC_008525.1"/>
</dbReference>
<dbReference type="SMR" id="Q03EQ8"/>
<dbReference type="STRING" id="278197.PEPE_1273"/>
<dbReference type="GeneID" id="33061706"/>
<dbReference type="KEGG" id="ppe:PEPE_1273"/>
<dbReference type="eggNOG" id="COG0323">
    <property type="taxonomic scope" value="Bacteria"/>
</dbReference>
<dbReference type="HOGENOM" id="CLU_004131_4_2_9"/>
<dbReference type="OrthoDB" id="9763467at2"/>
<dbReference type="Proteomes" id="UP000000773">
    <property type="component" value="Chromosome"/>
</dbReference>
<dbReference type="GO" id="GO:0032300">
    <property type="term" value="C:mismatch repair complex"/>
    <property type="evidence" value="ECO:0007669"/>
    <property type="project" value="InterPro"/>
</dbReference>
<dbReference type="GO" id="GO:0005524">
    <property type="term" value="F:ATP binding"/>
    <property type="evidence" value="ECO:0007669"/>
    <property type="project" value="InterPro"/>
</dbReference>
<dbReference type="GO" id="GO:0016887">
    <property type="term" value="F:ATP hydrolysis activity"/>
    <property type="evidence" value="ECO:0007669"/>
    <property type="project" value="InterPro"/>
</dbReference>
<dbReference type="GO" id="GO:0140664">
    <property type="term" value="F:ATP-dependent DNA damage sensor activity"/>
    <property type="evidence" value="ECO:0007669"/>
    <property type="project" value="InterPro"/>
</dbReference>
<dbReference type="GO" id="GO:0030983">
    <property type="term" value="F:mismatched DNA binding"/>
    <property type="evidence" value="ECO:0007669"/>
    <property type="project" value="InterPro"/>
</dbReference>
<dbReference type="GO" id="GO:0006298">
    <property type="term" value="P:mismatch repair"/>
    <property type="evidence" value="ECO:0007669"/>
    <property type="project" value="UniProtKB-UniRule"/>
</dbReference>
<dbReference type="CDD" id="cd16926">
    <property type="entry name" value="HATPase_MutL-MLH-PMS-like"/>
    <property type="match status" value="1"/>
</dbReference>
<dbReference type="CDD" id="cd00782">
    <property type="entry name" value="MutL_Trans"/>
    <property type="match status" value="1"/>
</dbReference>
<dbReference type="FunFam" id="3.30.1370.100:FF:000004">
    <property type="entry name" value="DNA mismatch repair endonuclease MutL"/>
    <property type="match status" value="1"/>
</dbReference>
<dbReference type="FunFam" id="3.30.565.10:FF:000003">
    <property type="entry name" value="DNA mismatch repair endonuclease MutL"/>
    <property type="match status" value="1"/>
</dbReference>
<dbReference type="Gene3D" id="3.30.230.10">
    <property type="match status" value="1"/>
</dbReference>
<dbReference type="Gene3D" id="3.30.565.10">
    <property type="entry name" value="Histidine kinase-like ATPase, C-terminal domain"/>
    <property type="match status" value="1"/>
</dbReference>
<dbReference type="Gene3D" id="3.30.1540.20">
    <property type="entry name" value="MutL, C-terminal domain, dimerisation subdomain"/>
    <property type="match status" value="1"/>
</dbReference>
<dbReference type="Gene3D" id="3.30.1370.100">
    <property type="entry name" value="MutL, C-terminal domain, regulatory subdomain"/>
    <property type="match status" value="1"/>
</dbReference>
<dbReference type="HAMAP" id="MF_00149">
    <property type="entry name" value="DNA_mis_repair"/>
    <property type="match status" value="1"/>
</dbReference>
<dbReference type="InterPro" id="IPR014762">
    <property type="entry name" value="DNA_mismatch_repair_CS"/>
</dbReference>
<dbReference type="InterPro" id="IPR020667">
    <property type="entry name" value="DNA_mismatch_repair_MutL"/>
</dbReference>
<dbReference type="InterPro" id="IPR013507">
    <property type="entry name" value="DNA_mismatch_S5_2-like"/>
</dbReference>
<dbReference type="InterPro" id="IPR036890">
    <property type="entry name" value="HATPase_C_sf"/>
</dbReference>
<dbReference type="InterPro" id="IPR002099">
    <property type="entry name" value="MutL/Mlh/PMS"/>
</dbReference>
<dbReference type="InterPro" id="IPR038973">
    <property type="entry name" value="MutL/Mlh/Pms-like"/>
</dbReference>
<dbReference type="InterPro" id="IPR014790">
    <property type="entry name" value="MutL_C"/>
</dbReference>
<dbReference type="InterPro" id="IPR042120">
    <property type="entry name" value="MutL_C_dimsub"/>
</dbReference>
<dbReference type="InterPro" id="IPR042121">
    <property type="entry name" value="MutL_C_regsub"/>
</dbReference>
<dbReference type="InterPro" id="IPR037198">
    <property type="entry name" value="MutL_C_sf"/>
</dbReference>
<dbReference type="InterPro" id="IPR020568">
    <property type="entry name" value="Ribosomal_Su5_D2-typ_SF"/>
</dbReference>
<dbReference type="InterPro" id="IPR014721">
    <property type="entry name" value="Ribsml_uS5_D2-typ_fold_subgr"/>
</dbReference>
<dbReference type="NCBIfam" id="TIGR00585">
    <property type="entry name" value="mutl"/>
    <property type="match status" value="1"/>
</dbReference>
<dbReference type="NCBIfam" id="NF000950">
    <property type="entry name" value="PRK00095.1-3"/>
    <property type="match status" value="1"/>
</dbReference>
<dbReference type="PANTHER" id="PTHR10073">
    <property type="entry name" value="DNA MISMATCH REPAIR PROTEIN MLH, PMS, MUTL"/>
    <property type="match status" value="1"/>
</dbReference>
<dbReference type="PANTHER" id="PTHR10073:SF12">
    <property type="entry name" value="DNA MISMATCH REPAIR PROTEIN MLH1"/>
    <property type="match status" value="1"/>
</dbReference>
<dbReference type="Pfam" id="PF01119">
    <property type="entry name" value="DNA_mis_repair"/>
    <property type="match status" value="1"/>
</dbReference>
<dbReference type="Pfam" id="PF13589">
    <property type="entry name" value="HATPase_c_3"/>
    <property type="match status" value="1"/>
</dbReference>
<dbReference type="Pfam" id="PF08676">
    <property type="entry name" value="MutL_C"/>
    <property type="match status" value="1"/>
</dbReference>
<dbReference type="SMART" id="SM01340">
    <property type="entry name" value="DNA_mis_repair"/>
    <property type="match status" value="1"/>
</dbReference>
<dbReference type="SMART" id="SM00853">
    <property type="entry name" value="MutL_C"/>
    <property type="match status" value="1"/>
</dbReference>
<dbReference type="SUPFAM" id="SSF55874">
    <property type="entry name" value="ATPase domain of HSP90 chaperone/DNA topoisomerase II/histidine kinase"/>
    <property type="match status" value="1"/>
</dbReference>
<dbReference type="SUPFAM" id="SSF118116">
    <property type="entry name" value="DNA mismatch repair protein MutL"/>
    <property type="match status" value="1"/>
</dbReference>
<dbReference type="SUPFAM" id="SSF54211">
    <property type="entry name" value="Ribosomal protein S5 domain 2-like"/>
    <property type="match status" value="1"/>
</dbReference>
<dbReference type="PROSITE" id="PS00058">
    <property type="entry name" value="DNA_MISMATCH_REPAIR_1"/>
    <property type="match status" value="1"/>
</dbReference>
<sequence length="645" mass="72566">MAEIHELSEILADQIAAGEVVERPASVVKELVENAIDAGSSRIDILLEESGLKMIRIIDNGSGIDANQVEIAFKRHATSKISSRSDLFKVGTLGFRGEALPSIASIADVEMLTATTDGPGKKIHYRGGKLEDSGDAQSRQGTDITVQDLFFNTPARLKYLKSLQTELSKITDIVNRIALSYPEVAISLQNNERELMRTSGNGNIQQVLANIYGAKNAQKMVHVKEQNIDFTIDGYISLPEFTRANRSYITVLVNGRYIKNFQISKAIIDGYGSKLMVGRYPVAVLNIKTDPILVDVNVHPTKQEVRISEEQTLLDLISKAVFNELADKNLIPDAVDNLKKSRVKVSSSEQLDLARMAISGSFEMEQDHVTIPDTDNDEVEKEVNISDRYVEPEPIVINSRQDLKSDTIAEFKTKYANDAVVNNTVEDGDQPELKEKDAVQRFPTLTYIGQMHGTYLFAEAEDGLYIIDQHAAQERINYEYYRVQIGEVSDDQQDLLVPIYLDYSTTDAIRIKEKQTVLESCGLFLEEFGKNTFIVRHHPTWFKKGQEEDTVKEMVDYVLNDSSMTVAKFREATAIMMSCKRAIKANHHLDEPQAKQLLKDIAKAENPFNCPHGRPVLVHFSTTDMEKMFKRIQDPHHSDLMEDEM</sequence>